<comment type="function">
    <text evidence="2 4 5 7 10">Component of the integrator complex, a multiprotein complex that terminates RNA polymerase II (Pol II) transcription in the promoter-proximal region of genes (PubMed:33243860, PubMed:38570683). The integrator complex provides a quality checkpoint during transcription elongation by driving premature transcription termination of transcripts that are unfavorably configured for transcriptional elongation: the complex terminates transcription by (1) catalyzing dephosphorylation of the C-terminal domain (CTD) of Pol II subunit POLR2A/RPB1 and SUPT5H/SPT5, (2) degrading the exiting nascent RNA transcript via endonuclease activity and (3) promoting the release of Pol II from bound DNA (PubMed:33243860, PubMed:38570683). The integrator complex is also involved in terminating the synthesis of non-coding Pol II transcripts, such as enhancer RNAs (eRNAs), small nuclear RNAs (snRNAs), telomerase RNAs and long non-coding RNAs (lncRNAs) (PubMed:16239144). May be not involved in the recruitment of cytoplasmic dynein to the nuclear envelope by different components of the INT complex (PubMed:23904267). Plays a role in DNA damage response (DDR) signaling during the S phase (PubMed:21659603).</text>
</comment>
<comment type="subunit">
    <text evidence="2 4 6 7 8 9 10 11">Component of the Integrator complex, composed of core subunits INTS1, INTS2, INTS3, INTS4, INTS5, INTS6, INTS7, INTS8, INTS9/RC74, INTS10, INTS11/CPSF3L, INTS12, INTS13, INTS14 and INTS15 (PubMed:16239144, PubMed:29471365, PubMed:34762484, PubMed:38570683, PubMed:39032490). The core complex associates with protein phosphatase 2A subunits PPP2CA and PPP2R1A, to form the Integrator-PP2A (INTAC) complex (PubMed:33243860, PubMed:34762484, PubMed:36869814, PubMed:38570683). Interacts with NABP2 (PubMed:21659603).</text>
</comment>
<comment type="interaction">
    <interactant intactId="EBI-11276282">
        <id>Q9NVH2</id>
    </interactant>
    <interactant intactId="EBI-718700">
        <id>P35219</id>
        <label>CA8</label>
    </interactant>
    <organismsDiffer>false</organismsDiffer>
    <experiments>3</experiments>
</comment>
<comment type="subcellular location">
    <subcellularLocation>
        <location evidence="4 6">Nucleus</location>
    </subcellularLocation>
    <subcellularLocation>
        <location evidence="4 6 11">Chromosome</location>
    </subcellularLocation>
    <subcellularLocation>
        <location evidence="5">Cytoplasm</location>
    </subcellularLocation>
    <text evidence="4">Localizes to sites of DNA damage in a H2AX-independent manner.</text>
</comment>
<comment type="alternative products">
    <event type="alternative splicing"/>
    <isoform>
        <id>Q9NVH2-1</id>
        <name>1</name>
        <sequence type="displayed"/>
    </isoform>
    <isoform>
        <id>Q9NVH2-2</id>
        <name>2</name>
        <sequence type="described" ref="VSP_021463"/>
    </isoform>
    <isoform>
        <id>Q9NVH2-3</id>
        <name>3</name>
        <sequence type="described" ref="VSP_021464"/>
    </isoform>
    <isoform>
        <id>Q9NVH2-4</id>
        <name>4</name>
        <sequence type="described" ref="VSP_043201"/>
    </isoform>
</comment>
<comment type="similarity">
    <text evidence="16">Belongs to the Integrator subunit 7 family.</text>
</comment>
<comment type="sequence caution" evidence="16">
    <conflict type="erroneous termination">
        <sequence resource="EMBL-CDS" id="BAA91650"/>
    </conflict>
    <text>Truncated C-terminus.</text>
</comment>
<comment type="sequence caution" evidence="16">
    <conflict type="erroneous initiation">
        <sequence resource="EMBL-CDS" id="BAB14116"/>
    </conflict>
    <text>Truncated N-terminus.</text>
</comment>
<keyword id="KW-0002">3D-structure</keyword>
<keyword id="KW-0025">Alternative splicing</keyword>
<keyword id="KW-0158">Chromosome</keyword>
<keyword id="KW-0963">Cytoplasm</keyword>
<keyword id="KW-0227">DNA damage</keyword>
<keyword id="KW-0539">Nucleus</keyword>
<keyword id="KW-0597">Phosphoprotein</keyword>
<keyword id="KW-1267">Proteomics identification</keyword>
<keyword id="KW-1185">Reference proteome</keyword>
<dbReference type="EMBL" id="AK001363">
    <property type="protein sequence ID" value="BAA91650.1"/>
    <property type="status" value="ALT_SEQ"/>
    <property type="molecule type" value="mRNA"/>
</dbReference>
<dbReference type="EMBL" id="AK001598">
    <property type="protein sequence ID" value="BAA91779.1"/>
    <property type="molecule type" value="mRNA"/>
</dbReference>
<dbReference type="EMBL" id="AK022509">
    <property type="protein sequence ID" value="BAB14067.1"/>
    <property type="molecule type" value="mRNA"/>
</dbReference>
<dbReference type="EMBL" id="AK022589">
    <property type="protein sequence ID" value="BAB14116.1"/>
    <property type="status" value="ALT_INIT"/>
    <property type="molecule type" value="mRNA"/>
</dbReference>
<dbReference type="EMBL" id="AK297225">
    <property type="protein sequence ID" value="BAG59708.1"/>
    <property type="molecule type" value="mRNA"/>
</dbReference>
<dbReference type="EMBL" id="AL117576">
    <property type="protein sequence ID" value="CAB56000.1"/>
    <property type="molecule type" value="mRNA"/>
</dbReference>
<dbReference type="EMBL" id="AM392654">
    <property type="protein sequence ID" value="CAL37532.1"/>
    <property type="molecule type" value="mRNA"/>
</dbReference>
<dbReference type="EMBL" id="AC092814">
    <property type="status" value="NOT_ANNOTATED_CDS"/>
    <property type="molecule type" value="Genomic_DNA"/>
</dbReference>
<dbReference type="EMBL" id="CH471100">
    <property type="protein sequence ID" value="EAW93406.1"/>
    <property type="molecule type" value="Genomic_DNA"/>
</dbReference>
<dbReference type="EMBL" id="BC020523">
    <property type="protein sequence ID" value="AAH20523.1"/>
    <property type="molecule type" value="mRNA"/>
</dbReference>
<dbReference type="EMBL" id="BC030716">
    <property type="protein sequence ID" value="AAH30716.1"/>
    <property type="molecule type" value="mRNA"/>
</dbReference>
<dbReference type="EMBL" id="BC033918">
    <property type="protein sequence ID" value="AAH33918.1"/>
    <property type="molecule type" value="mRNA"/>
</dbReference>
<dbReference type="EMBL" id="AL133049">
    <property type="protein sequence ID" value="CAB61376.1"/>
    <property type="molecule type" value="mRNA"/>
</dbReference>
<dbReference type="EMBL" id="BK005725">
    <property type="protein sequence ID" value="DAA05725.1"/>
    <property type="molecule type" value="mRNA"/>
</dbReference>
<dbReference type="CCDS" id="CCDS1501.1">
    <molecule id="Q9NVH2-1"/>
</dbReference>
<dbReference type="CCDS" id="CCDS55683.1">
    <molecule id="Q9NVH2-4"/>
</dbReference>
<dbReference type="CCDS" id="CCDS55684.1">
    <molecule id="Q9NVH2-3"/>
</dbReference>
<dbReference type="CCDS" id="CCDS55685.1">
    <molecule id="Q9NVH2-2"/>
</dbReference>
<dbReference type="PIR" id="T17310">
    <property type="entry name" value="T17310"/>
</dbReference>
<dbReference type="PIR" id="T42652">
    <property type="entry name" value="T42652"/>
</dbReference>
<dbReference type="RefSeq" id="NP_001186738.1">
    <molecule id="Q9NVH2-4"/>
    <property type="nucleotide sequence ID" value="NM_001199809.2"/>
</dbReference>
<dbReference type="RefSeq" id="NP_001186740.1">
    <molecule id="Q9NVH2-2"/>
    <property type="nucleotide sequence ID" value="NM_001199811.2"/>
</dbReference>
<dbReference type="RefSeq" id="NP_001186741.1">
    <molecule id="Q9NVH2-3"/>
    <property type="nucleotide sequence ID" value="NM_001199812.2"/>
</dbReference>
<dbReference type="RefSeq" id="NP_056249.1">
    <molecule id="Q9NVH2-1"/>
    <property type="nucleotide sequence ID" value="NM_015434.4"/>
</dbReference>
<dbReference type="PDB" id="7CUN">
    <property type="method" value="EM"/>
    <property type="resolution" value="3.50 A"/>
    <property type="chains" value="G=1-962"/>
</dbReference>
<dbReference type="PDB" id="7PKS">
    <property type="method" value="EM"/>
    <property type="resolution" value="3.60 A"/>
    <property type="chains" value="g=1-962"/>
</dbReference>
<dbReference type="PDB" id="7YCX">
    <property type="method" value="EM"/>
    <property type="resolution" value="4.18 A"/>
    <property type="chains" value="G=1-962"/>
</dbReference>
<dbReference type="PDB" id="8RBX">
    <property type="method" value="EM"/>
    <property type="resolution" value="4.10 A"/>
    <property type="chains" value="g=1-962"/>
</dbReference>
<dbReference type="PDB" id="8RBZ">
    <property type="method" value="EM"/>
    <property type="resolution" value="3.70 A"/>
    <property type="chains" value="g=1-962"/>
</dbReference>
<dbReference type="PDB" id="8RC4">
    <property type="method" value="EM"/>
    <property type="resolution" value="3.10 A"/>
    <property type="chains" value="g=1-962"/>
</dbReference>
<dbReference type="PDB" id="8YJB">
    <property type="method" value="EM"/>
    <property type="resolution" value="4.10 A"/>
    <property type="chains" value="G=1-962"/>
</dbReference>
<dbReference type="PDBsum" id="7CUN"/>
<dbReference type="PDBsum" id="7PKS"/>
<dbReference type="PDBsum" id="7YCX"/>
<dbReference type="PDBsum" id="8RBX"/>
<dbReference type="PDBsum" id="8RBZ"/>
<dbReference type="PDBsum" id="8RC4"/>
<dbReference type="PDBsum" id="8YJB"/>
<dbReference type="EMDB" id="EMD-13479"/>
<dbReference type="EMDB" id="EMD-19038"/>
<dbReference type="EMDB" id="EMD-19040"/>
<dbReference type="EMDB" id="EMD-19047"/>
<dbReference type="EMDB" id="EMD-30473"/>
<dbReference type="EMDB" id="EMD-33741"/>
<dbReference type="EMDB" id="EMD-39338"/>
<dbReference type="SMR" id="Q9NVH2"/>
<dbReference type="BioGRID" id="117404">
    <property type="interactions" value="124"/>
</dbReference>
<dbReference type="ComplexPortal" id="CPX-6441">
    <property type="entry name" value="Integrator complex"/>
</dbReference>
<dbReference type="CORUM" id="Q9NVH2"/>
<dbReference type="FunCoup" id="Q9NVH2">
    <property type="interactions" value="4547"/>
</dbReference>
<dbReference type="IntAct" id="Q9NVH2">
    <property type="interactions" value="97"/>
</dbReference>
<dbReference type="MINT" id="Q9NVH2"/>
<dbReference type="STRING" id="9606.ENSP00000355961"/>
<dbReference type="GlyGen" id="Q9NVH2">
    <property type="glycosylation" value="5 sites, 3 N-linked glycans (3 sites), 1 O-linked glycan (2 sites)"/>
</dbReference>
<dbReference type="iPTMnet" id="Q9NVH2"/>
<dbReference type="PhosphoSitePlus" id="Q9NVH2"/>
<dbReference type="BioMuta" id="INTS7"/>
<dbReference type="DMDM" id="74752993"/>
<dbReference type="jPOST" id="Q9NVH2"/>
<dbReference type="MassIVE" id="Q9NVH2"/>
<dbReference type="PaxDb" id="9606-ENSP00000355961"/>
<dbReference type="PeptideAtlas" id="Q9NVH2"/>
<dbReference type="ProteomicsDB" id="82799">
    <molecule id="Q9NVH2-1"/>
</dbReference>
<dbReference type="ProteomicsDB" id="82800">
    <molecule id="Q9NVH2-2"/>
</dbReference>
<dbReference type="ProteomicsDB" id="82801">
    <molecule id="Q9NVH2-3"/>
</dbReference>
<dbReference type="ProteomicsDB" id="82802">
    <molecule id="Q9NVH2-4"/>
</dbReference>
<dbReference type="Pumba" id="Q9NVH2"/>
<dbReference type="Antibodypedia" id="34604">
    <property type="antibodies" value="58 antibodies from 20 providers"/>
</dbReference>
<dbReference type="DNASU" id="25896"/>
<dbReference type="Ensembl" id="ENST00000366992.7">
    <molecule id="Q9NVH2-3"/>
    <property type="protein sequence ID" value="ENSP00000355959.3"/>
    <property type="gene ID" value="ENSG00000143493.13"/>
</dbReference>
<dbReference type="Ensembl" id="ENST00000366993.7">
    <molecule id="Q9NVH2-2"/>
    <property type="protein sequence ID" value="ENSP00000355960.3"/>
    <property type="gene ID" value="ENSG00000143493.13"/>
</dbReference>
<dbReference type="Ensembl" id="ENST00000366994.8">
    <molecule id="Q9NVH2-1"/>
    <property type="protein sequence ID" value="ENSP00000355961.3"/>
    <property type="gene ID" value="ENSG00000143493.13"/>
</dbReference>
<dbReference type="Ensembl" id="ENST00000440600.6">
    <molecule id="Q9NVH2-4"/>
    <property type="protein sequence ID" value="ENSP00000388908.2"/>
    <property type="gene ID" value="ENSG00000143493.13"/>
</dbReference>
<dbReference type="GeneID" id="25896"/>
<dbReference type="KEGG" id="hsa:25896"/>
<dbReference type="MANE-Select" id="ENST00000366994.8">
    <property type="protein sequence ID" value="ENSP00000355961.3"/>
    <property type="RefSeq nucleotide sequence ID" value="NM_015434.4"/>
    <property type="RefSeq protein sequence ID" value="NP_056249.1"/>
</dbReference>
<dbReference type="UCSC" id="uc001hiw.3">
    <molecule id="Q9NVH2-1"/>
    <property type="organism name" value="human"/>
</dbReference>
<dbReference type="AGR" id="HGNC:24484"/>
<dbReference type="CTD" id="25896"/>
<dbReference type="DisGeNET" id="25896"/>
<dbReference type="GeneCards" id="INTS7"/>
<dbReference type="HGNC" id="HGNC:24484">
    <property type="gene designation" value="INTS7"/>
</dbReference>
<dbReference type="HPA" id="ENSG00000143493">
    <property type="expression patterns" value="Low tissue specificity"/>
</dbReference>
<dbReference type="MIM" id="611350">
    <property type="type" value="gene"/>
</dbReference>
<dbReference type="neXtProt" id="NX_Q9NVH2"/>
<dbReference type="OpenTargets" id="ENSG00000143493"/>
<dbReference type="PharmGKB" id="PA142672522"/>
<dbReference type="VEuPathDB" id="HostDB:ENSG00000143493"/>
<dbReference type="eggNOG" id="KOG1988">
    <property type="taxonomic scope" value="Eukaryota"/>
</dbReference>
<dbReference type="GeneTree" id="ENSGT00390000011724"/>
<dbReference type="HOGENOM" id="CLU_013157_0_0_1"/>
<dbReference type="InParanoid" id="Q9NVH2"/>
<dbReference type="OMA" id="GITWCTG"/>
<dbReference type="OrthoDB" id="1921953at2759"/>
<dbReference type="PAN-GO" id="Q9NVH2">
    <property type="GO annotations" value="2 GO annotations based on evolutionary models"/>
</dbReference>
<dbReference type="PhylomeDB" id="Q9NVH2"/>
<dbReference type="TreeFam" id="TF106105"/>
<dbReference type="PathwayCommons" id="Q9NVH2"/>
<dbReference type="Reactome" id="R-HSA-6807505">
    <property type="pathway name" value="RNA polymerase II transcribes snRNA genes"/>
</dbReference>
<dbReference type="SignaLink" id="Q9NVH2"/>
<dbReference type="SIGNOR" id="Q9NVH2"/>
<dbReference type="BioGRID-ORCS" id="25896">
    <property type="hits" value="679 hits in 1158 CRISPR screens"/>
</dbReference>
<dbReference type="ChiTaRS" id="INTS7">
    <property type="organism name" value="human"/>
</dbReference>
<dbReference type="GeneWiki" id="INTS7"/>
<dbReference type="GenomeRNAi" id="25896"/>
<dbReference type="Pharos" id="Q9NVH2">
    <property type="development level" value="Tdark"/>
</dbReference>
<dbReference type="PRO" id="PR:Q9NVH2"/>
<dbReference type="Proteomes" id="UP000005640">
    <property type="component" value="Chromosome 1"/>
</dbReference>
<dbReference type="RNAct" id="Q9NVH2">
    <property type="molecule type" value="protein"/>
</dbReference>
<dbReference type="Bgee" id="ENSG00000143493">
    <property type="expression patterns" value="Expressed in ganglionic eminence and 165 other cell types or tissues"/>
</dbReference>
<dbReference type="ExpressionAtlas" id="Q9NVH2">
    <property type="expression patterns" value="baseline and differential"/>
</dbReference>
<dbReference type="GO" id="GO:0005694">
    <property type="term" value="C:chromosome"/>
    <property type="evidence" value="ECO:0000314"/>
    <property type="project" value="UniProtKB"/>
</dbReference>
<dbReference type="GO" id="GO:0005737">
    <property type="term" value="C:cytoplasm"/>
    <property type="evidence" value="ECO:0000314"/>
    <property type="project" value="UniProtKB"/>
</dbReference>
<dbReference type="GO" id="GO:0160232">
    <property type="term" value="C:INTAC complex"/>
    <property type="evidence" value="ECO:0000314"/>
    <property type="project" value="UniProtKB"/>
</dbReference>
<dbReference type="GO" id="GO:0032039">
    <property type="term" value="C:integrator complex"/>
    <property type="evidence" value="ECO:0000314"/>
    <property type="project" value="UniProtKB"/>
</dbReference>
<dbReference type="GO" id="GO:0016604">
    <property type="term" value="C:nuclear body"/>
    <property type="evidence" value="ECO:0000314"/>
    <property type="project" value="HPA"/>
</dbReference>
<dbReference type="GO" id="GO:0005654">
    <property type="term" value="C:nucleoplasm"/>
    <property type="evidence" value="ECO:0000304"/>
    <property type="project" value="Reactome"/>
</dbReference>
<dbReference type="GO" id="GO:0005634">
    <property type="term" value="C:nucleus"/>
    <property type="evidence" value="ECO:0000314"/>
    <property type="project" value="UniProtKB"/>
</dbReference>
<dbReference type="GO" id="GO:0071479">
    <property type="term" value="P:cellular response to ionizing radiation"/>
    <property type="evidence" value="ECO:0000314"/>
    <property type="project" value="UniProtKB"/>
</dbReference>
<dbReference type="GO" id="GO:0000077">
    <property type="term" value="P:DNA damage checkpoint signaling"/>
    <property type="evidence" value="ECO:0000315"/>
    <property type="project" value="UniProtKB"/>
</dbReference>
<dbReference type="GO" id="GO:0034243">
    <property type="term" value="P:regulation of transcription elongation by RNA polymerase II"/>
    <property type="evidence" value="ECO:0000303"/>
    <property type="project" value="ComplexPortal"/>
</dbReference>
<dbReference type="GO" id="GO:0160240">
    <property type="term" value="P:RNA polymerase II transcription initiation surveillance"/>
    <property type="evidence" value="ECO:0000314"/>
    <property type="project" value="UniProtKB"/>
</dbReference>
<dbReference type="GO" id="GO:0034472">
    <property type="term" value="P:snRNA 3'-end processing"/>
    <property type="evidence" value="ECO:0000318"/>
    <property type="project" value="GO_Central"/>
</dbReference>
<dbReference type="GO" id="GO:0016180">
    <property type="term" value="P:snRNA processing"/>
    <property type="evidence" value="ECO:0000314"/>
    <property type="project" value="HGNC-UCL"/>
</dbReference>
<dbReference type="FunFam" id="1.25.10.10:FF:001004">
    <property type="entry name" value="Integrator complex subunit 7"/>
    <property type="match status" value="1"/>
</dbReference>
<dbReference type="InterPro" id="IPR016024">
    <property type="entry name" value="ARM-type_fold"/>
</dbReference>
<dbReference type="InterPro" id="IPR033060">
    <property type="entry name" value="INTS7"/>
</dbReference>
<dbReference type="InterPro" id="IPR054519">
    <property type="entry name" value="INTS7_C"/>
</dbReference>
<dbReference type="InterPro" id="IPR056517">
    <property type="entry name" value="INTS7_HB"/>
</dbReference>
<dbReference type="InterPro" id="IPR056516">
    <property type="entry name" value="INTS7_N"/>
</dbReference>
<dbReference type="PANTHER" id="PTHR13322">
    <property type="entry name" value="C1ORF73 PROTEIN"/>
    <property type="match status" value="1"/>
</dbReference>
<dbReference type="PANTHER" id="PTHR13322:SF2">
    <property type="entry name" value="INTEGRATOR COMPLEX SUBUNIT 7"/>
    <property type="match status" value="1"/>
</dbReference>
<dbReference type="Pfam" id="PF22965">
    <property type="entry name" value="INTS7_C"/>
    <property type="match status" value="1"/>
</dbReference>
<dbReference type="Pfam" id="PF24437">
    <property type="entry name" value="INTS7_HB"/>
    <property type="match status" value="1"/>
</dbReference>
<dbReference type="Pfam" id="PF24436">
    <property type="entry name" value="INTS7_N"/>
    <property type="match status" value="1"/>
</dbReference>
<dbReference type="SUPFAM" id="SSF48371">
    <property type="entry name" value="ARM repeat"/>
    <property type="match status" value="1"/>
</dbReference>
<evidence type="ECO:0000269" key="1">
    <source>
    </source>
</evidence>
<evidence type="ECO:0000269" key="2">
    <source>
    </source>
</evidence>
<evidence type="ECO:0000269" key="3">
    <source>
    </source>
</evidence>
<evidence type="ECO:0000269" key="4">
    <source>
    </source>
</evidence>
<evidence type="ECO:0000269" key="5">
    <source>
    </source>
</evidence>
<evidence type="ECO:0000269" key="6">
    <source>
    </source>
</evidence>
<evidence type="ECO:0000269" key="7">
    <source>
    </source>
</evidence>
<evidence type="ECO:0000269" key="8">
    <source>
    </source>
</evidence>
<evidence type="ECO:0000269" key="9">
    <source>
    </source>
</evidence>
<evidence type="ECO:0000269" key="10">
    <source>
    </source>
</evidence>
<evidence type="ECO:0000269" key="11">
    <source>
    </source>
</evidence>
<evidence type="ECO:0000303" key="12">
    <source>
    </source>
</evidence>
<evidence type="ECO:0000303" key="13">
    <source>
    </source>
</evidence>
<evidence type="ECO:0000303" key="14">
    <source>
    </source>
</evidence>
<evidence type="ECO:0000303" key="15">
    <source>
    </source>
</evidence>
<evidence type="ECO:0000305" key="16"/>
<evidence type="ECO:0000312" key="17">
    <source>
        <dbReference type="HGNC" id="HGNC:24484"/>
    </source>
</evidence>
<evidence type="ECO:0007744" key="18">
    <source>
        <dbReference type="PDB" id="7CUN"/>
    </source>
</evidence>
<evidence type="ECO:0007744" key="19">
    <source>
        <dbReference type="PDB" id="7PKS"/>
    </source>
</evidence>
<evidence type="ECO:0007744" key="20">
    <source>
        <dbReference type="PDB" id="7YCX"/>
    </source>
</evidence>
<evidence type="ECO:0007744" key="21">
    <source>
        <dbReference type="PDB" id="8RBX"/>
    </source>
</evidence>
<evidence type="ECO:0007744" key="22">
    <source>
        <dbReference type="PDB" id="8RBZ"/>
    </source>
</evidence>
<evidence type="ECO:0007744" key="23">
    <source>
        <dbReference type="PDB" id="8RC4"/>
    </source>
</evidence>
<evidence type="ECO:0007744" key="24">
    <source>
    </source>
</evidence>
<evidence type="ECO:0007829" key="25">
    <source>
        <dbReference type="PDB" id="7CUN"/>
    </source>
</evidence>
<evidence type="ECO:0007829" key="26">
    <source>
        <dbReference type="PDB" id="8RC4"/>
    </source>
</evidence>
<feature type="chain" id="PRO_0000259549" description="Integrator complex subunit 7">
    <location>
        <begin position="1"/>
        <end position="962"/>
    </location>
</feature>
<feature type="modified residue" description="Phosphoserine" evidence="24">
    <location>
        <position position="338"/>
    </location>
</feature>
<feature type="modified residue" description="Phosphoserine" evidence="24">
    <location>
        <position position="809"/>
    </location>
</feature>
<feature type="splice variant" id="VSP_043201" description="In isoform 4." evidence="12">
    <location>
        <begin position="76"/>
        <end position="124"/>
    </location>
</feature>
<feature type="splice variant" id="VSP_021463" description="In isoform 2." evidence="13 14">
    <location>
        <begin position="759"/>
        <end position="772"/>
    </location>
</feature>
<feature type="splice variant" id="VSP_021464" description="In isoform 3." evidence="12">
    <location>
        <begin position="773"/>
        <end position="792"/>
    </location>
</feature>
<feature type="sequence variant" id="VAR_028963" description="In dbSNP:rs17851788." evidence="1 3">
    <original>H</original>
    <variation>R</variation>
    <location>
        <position position="425"/>
    </location>
</feature>
<feature type="sequence conflict" description="In Ref. 1; BAB14116." evidence="16" ref="1">
    <original>K</original>
    <variation>T</variation>
    <location>
        <position position="805"/>
    </location>
</feature>
<feature type="helix" evidence="26">
    <location>
        <begin position="22"/>
        <end position="33"/>
    </location>
</feature>
<feature type="helix" evidence="26">
    <location>
        <begin position="38"/>
        <end position="54"/>
    </location>
</feature>
<feature type="helix" evidence="26">
    <location>
        <begin position="58"/>
        <end position="74"/>
    </location>
</feature>
<feature type="helix" evidence="26">
    <location>
        <begin position="77"/>
        <end position="89"/>
    </location>
</feature>
<feature type="turn" evidence="26">
    <location>
        <begin position="90"/>
        <end position="92"/>
    </location>
</feature>
<feature type="helix" evidence="26">
    <location>
        <begin position="93"/>
        <end position="96"/>
    </location>
</feature>
<feature type="helix" evidence="26">
    <location>
        <begin position="100"/>
        <end position="108"/>
    </location>
</feature>
<feature type="helix" evidence="26">
    <location>
        <begin position="109"/>
        <end position="112"/>
    </location>
</feature>
<feature type="helix" evidence="26">
    <location>
        <begin position="116"/>
        <end position="128"/>
    </location>
</feature>
<feature type="turn" evidence="26">
    <location>
        <begin position="129"/>
        <end position="132"/>
    </location>
</feature>
<feature type="helix" evidence="26">
    <location>
        <begin position="137"/>
        <end position="147"/>
    </location>
</feature>
<feature type="helix" evidence="26">
    <location>
        <begin position="152"/>
        <end position="168"/>
    </location>
</feature>
<feature type="helix" evidence="26">
    <location>
        <begin position="170"/>
        <end position="185"/>
    </location>
</feature>
<feature type="helix" evidence="26">
    <location>
        <begin position="191"/>
        <end position="197"/>
    </location>
</feature>
<feature type="helix" evidence="26">
    <location>
        <begin position="198"/>
        <end position="203"/>
    </location>
</feature>
<feature type="helix" evidence="26">
    <location>
        <begin position="208"/>
        <end position="224"/>
    </location>
</feature>
<feature type="helix" evidence="26">
    <location>
        <begin position="228"/>
        <end position="245"/>
    </location>
</feature>
<feature type="helix" evidence="26">
    <location>
        <begin position="249"/>
        <end position="262"/>
    </location>
</feature>
<feature type="helix" evidence="26">
    <location>
        <begin position="266"/>
        <end position="282"/>
    </location>
</feature>
<feature type="helix" evidence="26">
    <location>
        <begin position="284"/>
        <end position="286"/>
    </location>
</feature>
<feature type="helix" evidence="26">
    <location>
        <begin position="289"/>
        <end position="300"/>
    </location>
</feature>
<feature type="helix" evidence="26">
    <location>
        <begin position="305"/>
        <end position="319"/>
    </location>
</feature>
<feature type="helix" evidence="26">
    <location>
        <begin position="323"/>
        <end position="327"/>
    </location>
</feature>
<feature type="helix" evidence="26">
    <location>
        <begin position="343"/>
        <end position="351"/>
    </location>
</feature>
<feature type="helix" evidence="26">
    <location>
        <begin position="357"/>
        <end position="373"/>
    </location>
</feature>
<feature type="helix" evidence="26">
    <location>
        <begin position="377"/>
        <end position="379"/>
    </location>
</feature>
<feature type="helix" evidence="26">
    <location>
        <begin position="381"/>
        <end position="398"/>
    </location>
</feature>
<feature type="helix" evidence="26">
    <location>
        <begin position="403"/>
        <end position="422"/>
    </location>
</feature>
<feature type="helix" evidence="26">
    <location>
        <begin position="424"/>
        <end position="426"/>
    </location>
</feature>
<feature type="helix" evidence="26">
    <location>
        <begin position="427"/>
        <end position="438"/>
    </location>
</feature>
<feature type="helix" evidence="26">
    <location>
        <begin position="443"/>
        <end position="459"/>
    </location>
</feature>
<feature type="helix" evidence="26">
    <location>
        <begin position="461"/>
        <end position="467"/>
    </location>
</feature>
<feature type="helix" evidence="26">
    <location>
        <begin position="468"/>
        <end position="479"/>
    </location>
</feature>
<feature type="helix" evidence="26">
    <location>
        <begin position="486"/>
        <end position="500"/>
    </location>
</feature>
<feature type="helix" evidence="26">
    <location>
        <begin position="507"/>
        <end position="519"/>
    </location>
</feature>
<feature type="helix" evidence="26">
    <location>
        <begin position="523"/>
        <end position="535"/>
    </location>
</feature>
<feature type="helix" evidence="26">
    <location>
        <begin position="539"/>
        <end position="549"/>
    </location>
</feature>
<feature type="turn" evidence="26">
    <location>
        <begin position="550"/>
        <end position="552"/>
    </location>
</feature>
<feature type="helix" evidence="26">
    <location>
        <begin position="556"/>
        <end position="574"/>
    </location>
</feature>
<feature type="helix" evidence="26">
    <location>
        <begin position="583"/>
        <end position="607"/>
    </location>
</feature>
<feature type="strand" evidence="25">
    <location>
        <begin position="610"/>
        <end position="612"/>
    </location>
</feature>
<feature type="helix" evidence="26">
    <location>
        <begin position="615"/>
        <end position="625"/>
    </location>
</feature>
<feature type="turn" evidence="26">
    <location>
        <begin position="626"/>
        <end position="628"/>
    </location>
</feature>
<feature type="helix" evidence="26">
    <location>
        <begin position="629"/>
        <end position="640"/>
    </location>
</feature>
<feature type="helix" evidence="26">
    <location>
        <begin position="647"/>
        <end position="650"/>
    </location>
</feature>
<feature type="strand" evidence="25">
    <location>
        <begin position="659"/>
        <end position="661"/>
    </location>
</feature>
<feature type="helix" evidence="26">
    <location>
        <begin position="662"/>
        <end position="664"/>
    </location>
</feature>
<feature type="helix" evidence="26">
    <location>
        <begin position="666"/>
        <end position="690"/>
    </location>
</feature>
<feature type="helix" evidence="26">
    <location>
        <begin position="697"/>
        <end position="720"/>
    </location>
</feature>
<feature type="strand" evidence="26">
    <location>
        <begin position="734"/>
        <end position="737"/>
    </location>
</feature>
<feature type="helix" evidence="26">
    <location>
        <begin position="743"/>
        <end position="760"/>
    </location>
</feature>
<feature type="strand" evidence="26">
    <location>
        <begin position="763"/>
        <end position="766"/>
    </location>
</feature>
<feature type="turn" evidence="25">
    <location>
        <begin position="768"/>
        <end position="770"/>
    </location>
</feature>
<feature type="helix" evidence="26">
    <location>
        <begin position="771"/>
        <end position="786"/>
    </location>
</feature>
<feature type="helix" evidence="26">
    <location>
        <begin position="793"/>
        <end position="796"/>
    </location>
</feature>
<feature type="strand" evidence="25">
    <location>
        <begin position="802"/>
        <end position="804"/>
    </location>
</feature>
<feature type="strand" evidence="26">
    <location>
        <begin position="819"/>
        <end position="836"/>
    </location>
</feature>
<feature type="helix" evidence="25">
    <location>
        <begin position="841"/>
        <end position="843"/>
    </location>
</feature>
<feature type="strand" evidence="26">
    <location>
        <begin position="847"/>
        <end position="858"/>
    </location>
</feature>
<feature type="strand" evidence="25">
    <location>
        <begin position="862"/>
        <end position="867"/>
    </location>
</feature>
<feature type="turn" evidence="25">
    <location>
        <begin position="871"/>
        <end position="874"/>
    </location>
</feature>
<feature type="strand" evidence="26">
    <location>
        <begin position="877"/>
        <end position="881"/>
    </location>
</feature>
<feature type="strand" evidence="26">
    <location>
        <begin position="884"/>
        <end position="894"/>
    </location>
</feature>
<feature type="strand" evidence="26">
    <location>
        <begin position="900"/>
        <end position="915"/>
    </location>
</feature>
<feature type="strand" evidence="26">
    <location>
        <begin position="925"/>
        <end position="931"/>
    </location>
</feature>
<feature type="helix" evidence="26">
    <location>
        <begin position="934"/>
        <end position="944"/>
    </location>
</feature>
<gene>
    <name evidence="15 17" type="primary">INTS7</name>
    <name evidence="17" type="synonym">C1orf73</name>
</gene>
<organism>
    <name type="scientific">Homo sapiens</name>
    <name type="common">Human</name>
    <dbReference type="NCBI Taxonomy" id="9606"/>
    <lineage>
        <taxon>Eukaryota</taxon>
        <taxon>Metazoa</taxon>
        <taxon>Chordata</taxon>
        <taxon>Craniata</taxon>
        <taxon>Vertebrata</taxon>
        <taxon>Euteleostomi</taxon>
        <taxon>Mammalia</taxon>
        <taxon>Eutheria</taxon>
        <taxon>Euarchontoglires</taxon>
        <taxon>Primates</taxon>
        <taxon>Haplorrhini</taxon>
        <taxon>Catarrhini</taxon>
        <taxon>Hominidae</taxon>
        <taxon>Homo</taxon>
    </lineage>
</organism>
<protein>
    <recommendedName>
        <fullName evidence="16">Integrator complex subunit 7</fullName>
        <shortName>Int7</shortName>
    </recommendedName>
</protein>
<accession>Q9NVH2</accession>
<accession>B4DLZ6</accession>
<accession>B7WNP6</accession>
<accession>B7WPB6</accession>
<accession>Q8N4K7</accession>
<accession>Q8WUH5</accession>
<accession>Q9H9V3</accession>
<accession>Q9NVU5</accession>
<accession>Q9UFC6</accession>
<accession>Q9UFM3</accession>
<name>INT7_HUMAN</name>
<reference key="1">
    <citation type="journal article" date="2004" name="Nat. Genet.">
        <title>Complete sequencing and characterization of 21,243 full-length human cDNAs.</title>
        <authorList>
            <person name="Ota T."/>
            <person name="Suzuki Y."/>
            <person name="Nishikawa T."/>
            <person name="Otsuki T."/>
            <person name="Sugiyama T."/>
            <person name="Irie R."/>
            <person name="Wakamatsu A."/>
            <person name="Hayashi K."/>
            <person name="Sato H."/>
            <person name="Nagai K."/>
            <person name="Kimura K."/>
            <person name="Makita H."/>
            <person name="Sekine M."/>
            <person name="Obayashi M."/>
            <person name="Nishi T."/>
            <person name="Shibahara T."/>
            <person name="Tanaka T."/>
            <person name="Ishii S."/>
            <person name="Yamamoto J."/>
            <person name="Saito K."/>
            <person name="Kawai Y."/>
            <person name="Isono Y."/>
            <person name="Nakamura Y."/>
            <person name="Nagahari K."/>
            <person name="Murakami K."/>
            <person name="Yasuda T."/>
            <person name="Iwayanagi T."/>
            <person name="Wagatsuma M."/>
            <person name="Shiratori A."/>
            <person name="Sudo H."/>
            <person name="Hosoiri T."/>
            <person name="Kaku Y."/>
            <person name="Kodaira H."/>
            <person name="Kondo H."/>
            <person name="Sugawara M."/>
            <person name="Takahashi M."/>
            <person name="Kanda K."/>
            <person name="Yokoi T."/>
            <person name="Furuya T."/>
            <person name="Kikkawa E."/>
            <person name="Omura Y."/>
            <person name="Abe K."/>
            <person name="Kamihara K."/>
            <person name="Katsuta N."/>
            <person name="Sato K."/>
            <person name="Tanikawa M."/>
            <person name="Yamazaki M."/>
            <person name="Ninomiya K."/>
            <person name="Ishibashi T."/>
            <person name="Yamashita H."/>
            <person name="Murakawa K."/>
            <person name="Fujimori K."/>
            <person name="Tanai H."/>
            <person name="Kimata M."/>
            <person name="Watanabe M."/>
            <person name="Hiraoka S."/>
            <person name="Chiba Y."/>
            <person name="Ishida S."/>
            <person name="Ono Y."/>
            <person name="Takiguchi S."/>
            <person name="Watanabe S."/>
            <person name="Yosida M."/>
            <person name="Hotuta T."/>
            <person name="Kusano J."/>
            <person name="Kanehori K."/>
            <person name="Takahashi-Fujii A."/>
            <person name="Hara H."/>
            <person name="Tanase T.-O."/>
            <person name="Nomura Y."/>
            <person name="Togiya S."/>
            <person name="Komai F."/>
            <person name="Hara R."/>
            <person name="Takeuchi K."/>
            <person name="Arita M."/>
            <person name="Imose N."/>
            <person name="Musashino K."/>
            <person name="Yuuki H."/>
            <person name="Oshima A."/>
            <person name="Sasaki N."/>
            <person name="Aotsuka S."/>
            <person name="Yoshikawa Y."/>
            <person name="Matsunawa H."/>
            <person name="Ichihara T."/>
            <person name="Shiohata N."/>
            <person name="Sano S."/>
            <person name="Moriya S."/>
            <person name="Momiyama H."/>
            <person name="Satoh N."/>
            <person name="Takami S."/>
            <person name="Terashima Y."/>
            <person name="Suzuki O."/>
            <person name="Nakagawa S."/>
            <person name="Senoh A."/>
            <person name="Mizoguchi H."/>
            <person name="Goto Y."/>
            <person name="Shimizu F."/>
            <person name="Wakebe H."/>
            <person name="Hishigaki H."/>
            <person name="Watanabe T."/>
            <person name="Sugiyama A."/>
            <person name="Takemoto M."/>
            <person name="Kawakami B."/>
            <person name="Yamazaki M."/>
            <person name="Watanabe K."/>
            <person name="Kumagai A."/>
            <person name="Itakura S."/>
            <person name="Fukuzumi Y."/>
            <person name="Fujimori Y."/>
            <person name="Komiyama M."/>
            <person name="Tashiro H."/>
            <person name="Tanigami A."/>
            <person name="Fujiwara T."/>
            <person name="Ono T."/>
            <person name="Yamada K."/>
            <person name="Fujii Y."/>
            <person name="Ozaki K."/>
            <person name="Hirao M."/>
            <person name="Ohmori Y."/>
            <person name="Kawabata A."/>
            <person name="Hikiji T."/>
            <person name="Kobatake N."/>
            <person name="Inagaki H."/>
            <person name="Ikema Y."/>
            <person name="Okamoto S."/>
            <person name="Okitani R."/>
            <person name="Kawakami T."/>
            <person name="Noguchi S."/>
            <person name="Itoh T."/>
            <person name="Shigeta K."/>
            <person name="Senba T."/>
            <person name="Matsumura K."/>
            <person name="Nakajima Y."/>
            <person name="Mizuno T."/>
            <person name="Morinaga M."/>
            <person name="Sasaki M."/>
            <person name="Togashi T."/>
            <person name="Oyama M."/>
            <person name="Hata H."/>
            <person name="Watanabe M."/>
            <person name="Komatsu T."/>
            <person name="Mizushima-Sugano J."/>
            <person name="Satoh T."/>
            <person name="Shirai Y."/>
            <person name="Takahashi Y."/>
            <person name="Nakagawa K."/>
            <person name="Okumura K."/>
            <person name="Nagase T."/>
            <person name="Nomura N."/>
            <person name="Kikuchi H."/>
            <person name="Masuho Y."/>
            <person name="Yamashita R."/>
            <person name="Nakai K."/>
            <person name="Yada T."/>
            <person name="Nakamura Y."/>
            <person name="Ohara O."/>
            <person name="Isogai T."/>
            <person name="Sugano S."/>
        </authorList>
    </citation>
    <scope>NUCLEOTIDE SEQUENCE [LARGE SCALE MRNA] (ISOFORMS 1; 3 AND 4)</scope>
    <source>
        <tissue>Brain</tissue>
    </source>
</reference>
<reference key="2">
    <citation type="journal article" date="2007" name="BMC Genomics">
        <title>The full-ORF clone resource of the German cDNA consortium.</title>
        <authorList>
            <person name="Bechtel S."/>
            <person name="Rosenfelder H."/>
            <person name="Duda A."/>
            <person name="Schmidt C.P."/>
            <person name="Ernst U."/>
            <person name="Wellenreuther R."/>
            <person name="Mehrle A."/>
            <person name="Schuster C."/>
            <person name="Bahr A."/>
            <person name="Bloecker H."/>
            <person name="Heubner D."/>
            <person name="Hoerlein A."/>
            <person name="Michel G."/>
            <person name="Wedler H."/>
            <person name="Koehrer K."/>
            <person name="Ottenwaelder B."/>
            <person name="Poustka A."/>
            <person name="Wiemann S."/>
            <person name="Schupp I."/>
        </authorList>
    </citation>
    <scope>NUCLEOTIDE SEQUENCE [LARGE SCALE MRNA] (ISOFORMS 1 AND 2)</scope>
    <scope>VARIANT ARG-425</scope>
    <source>
        <tissue>Testis</tissue>
    </source>
</reference>
<reference key="3">
    <citation type="journal article" date="2006" name="Nature">
        <title>The DNA sequence and biological annotation of human chromosome 1.</title>
        <authorList>
            <person name="Gregory S.G."/>
            <person name="Barlow K.F."/>
            <person name="McLay K.E."/>
            <person name="Kaul R."/>
            <person name="Swarbreck D."/>
            <person name="Dunham A."/>
            <person name="Scott C.E."/>
            <person name="Howe K.L."/>
            <person name="Woodfine K."/>
            <person name="Spencer C.C.A."/>
            <person name="Jones M.C."/>
            <person name="Gillson C."/>
            <person name="Searle S."/>
            <person name="Zhou Y."/>
            <person name="Kokocinski F."/>
            <person name="McDonald L."/>
            <person name="Evans R."/>
            <person name="Phillips K."/>
            <person name="Atkinson A."/>
            <person name="Cooper R."/>
            <person name="Jones C."/>
            <person name="Hall R.E."/>
            <person name="Andrews T.D."/>
            <person name="Lloyd C."/>
            <person name="Ainscough R."/>
            <person name="Almeida J.P."/>
            <person name="Ambrose K.D."/>
            <person name="Anderson F."/>
            <person name="Andrew R.W."/>
            <person name="Ashwell R.I.S."/>
            <person name="Aubin K."/>
            <person name="Babbage A.K."/>
            <person name="Bagguley C.L."/>
            <person name="Bailey J."/>
            <person name="Beasley H."/>
            <person name="Bethel G."/>
            <person name="Bird C.P."/>
            <person name="Bray-Allen S."/>
            <person name="Brown J.Y."/>
            <person name="Brown A.J."/>
            <person name="Buckley D."/>
            <person name="Burton J."/>
            <person name="Bye J."/>
            <person name="Carder C."/>
            <person name="Chapman J.C."/>
            <person name="Clark S.Y."/>
            <person name="Clarke G."/>
            <person name="Clee C."/>
            <person name="Cobley V."/>
            <person name="Collier R.E."/>
            <person name="Corby N."/>
            <person name="Coville G.J."/>
            <person name="Davies J."/>
            <person name="Deadman R."/>
            <person name="Dunn M."/>
            <person name="Earthrowl M."/>
            <person name="Ellington A.G."/>
            <person name="Errington H."/>
            <person name="Frankish A."/>
            <person name="Frankland J."/>
            <person name="French L."/>
            <person name="Garner P."/>
            <person name="Garnett J."/>
            <person name="Gay L."/>
            <person name="Ghori M.R.J."/>
            <person name="Gibson R."/>
            <person name="Gilby L.M."/>
            <person name="Gillett W."/>
            <person name="Glithero R.J."/>
            <person name="Grafham D.V."/>
            <person name="Griffiths C."/>
            <person name="Griffiths-Jones S."/>
            <person name="Grocock R."/>
            <person name="Hammond S."/>
            <person name="Harrison E.S.I."/>
            <person name="Hart E."/>
            <person name="Haugen E."/>
            <person name="Heath P.D."/>
            <person name="Holmes S."/>
            <person name="Holt K."/>
            <person name="Howden P.J."/>
            <person name="Hunt A.R."/>
            <person name="Hunt S.E."/>
            <person name="Hunter G."/>
            <person name="Isherwood J."/>
            <person name="James R."/>
            <person name="Johnson C."/>
            <person name="Johnson D."/>
            <person name="Joy A."/>
            <person name="Kay M."/>
            <person name="Kershaw J.K."/>
            <person name="Kibukawa M."/>
            <person name="Kimberley A.M."/>
            <person name="King A."/>
            <person name="Knights A.J."/>
            <person name="Lad H."/>
            <person name="Laird G."/>
            <person name="Lawlor S."/>
            <person name="Leongamornlert D.A."/>
            <person name="Lloyd D.M."/>
            <person name="Loveland J."/>
            <person name="Lovell J."/>
            <person name="Lush M.J."/>
            <person name="Lyne R."/>
            <person name="Martin S."/>
            <person name="Mashreghi-Mohammadi M."/>
            <person name="Matthews L."/>
            <person name="Matthews N.S.W."/>
            <person name="McLaren S."/>
            <person name="Milne S."/>
            <person name="Mistry S."/>
            <person name="Moore M.J.F."/>
            <person name="Nickerson T."/>
            <person name="O'Dell C.N."/>
            <person name="Oliver K."/>
            <person name="Palmeiri A."/>
            <person name="Palmer S.A."/>
            <person name="Parker A."/>
            <person name="Patel D."/>
            <person name="Pearce A.V."/>
            <person name="Peck A.I."/>
            <person name="Pelan S."/>
            <person name="Phelps K."/>
            <person name="Phillimore B.J."/>
            <person name="Plumb R."/>
            <person name="Rajan J."/>
            <person name="Raymond C."/>
            <person name="Rouse G."/>
            <person name="Saenphimmachak C."/>
            <person name="Sehra H.K."/>
            <person name="Sheridan E."/>
            <person name="Shownkeen R."/>
            <person name="Sims S."/>
            <person name="Skuce C.D."/>
            <person name="Smith M."/>
            <person name="Steward C."/>
            <person name="Subramanian S."/>
            <person name="Sycamore N."/>
            <person name="Tracey A."/>
            <person name="Tromans A."/>
            <person name="Van Helmond Z."/>
            <person name="Wall M."/>
            <person name="Wallis J.M."/>
            <person name="White S."/>
            <person name="Whitehead S.L."/>
            <person name="Wilkinson J.E."/>
            <person name="Willey D.L."/>
            <person name="Williams H."/>
            <person name="Wilming L."/>
            <person name="Wray P.W."/>
            <person name="Wu Z."/>
            <person name="Coulson A."/>
            <person name="Vaudin M."/>
            <person name="Sulston J.E."/>
            <person name="Durbin R.M."/>
            <person name="Hubbard T."/>
            <person name="Wooster R."/>
            <person name="Dunham I."/>
            <person name="Carter N.P."/>
            <person name="McVean G."/>
            <person name="Ross M.T."/>
            <person name="Harrow J."/>
            <person name="Olson M.V."/>
            <person name="Beck S."/>
            <person name="Rogers J."/>
            <person name="Bentley D.R."/>
        </authorList>
    </citation>
    <scope>NUCLEOTIDE SEQUENCE [LARGE SCALE GENOMIC DNA]</scope>
</reference>
<reference key="4">
    <citation type="submission" date="2005-09" db="EMBL/GenBank/DDBJ databases">
        <authorList>
            <person name="Mural R.J."/>
            <person name="Istrail S."/>
            <person name="Sutton G.G."/>
            <person name="Florea L."/>
            <person name="Halpern A.L."/>
            <person name="Mobarry C.M."/>
            <person name="Lippert R."/>
            <person name="Walenz B."/>
            <person name="Shatkay H."/>
            <person name="Dew I."/>
            <person name="Miller J.R."/>
            <person name="Flanigan M.J."/>
            <person name="Edwards N.J."/>
            <person name="Bolanos R."/>
            <person name="Fasulo D."/>
            <person name="Halldorsson B.V."/>
            <person name="Hannenhalli S."/>
            <person name="Turner R."/>
            <person name="Yooseph S."/>
            <person name="Lu F."/>
            <person name="Nusskern D.R."/>
            <person name="Shue B.C."/>
            <person name="Zheng X.H."/>
            <person name="Zhong F."/>
            <person name="Delcher A.L."/>
            <person name="Huson D.H."/>
            <person name="Kravitz S.A."/>
            <person name="Mouchard L."/>
            <person name="Reinert K."/>
            <person name="Remington K.A."/>
            <person name="Clark A.G."/>
            <person name="Waterman M.S."/>
            <person name="Eichler E.E."/>
            <person name="Adams M.D."/>
            <person name="Hunkapiller M.W."/>
            <person name="Myers E.W."/>
            <person name="Venter J.C."/>
        </authorList>
    </citation>
    <scope>NUCLEOTIDE SEQUENCE [LARGE SCALE GENOMIC DNA]</scope>
</reference>
<reference key="5">
    <citation type="journal article" date="2004" name="Genome Res.">
        <title>The status, quality, and expansion of the NIH full-length cDNA project: the Mammalian Gene Collection (MGC).</title>
        <authorList>
            <consortium name="The MGC Project Team"/>
        </authorList>
    </citation>
    <scope>NUCLEOTIDE SEQUENCE [LARGE SCALE MRNA] (ISOFORMS 1 AND 2)</scope>
    <scope>VARIANT ARG-425</scope>
    <source>
        <tissue>Skin</tissue>
        <tissue>Uterus</tissue>
    </source>
</reference>
<reference key="6">
    <citation type="journal article" date="2001" name="Genome Res.">
        <title>Towards a catalog of human genes and proteins: sequencing and analysis of 500 novel complete protein coding human cDNAs.</title>
        <authorList>
            <person name="Wiemann S."/>
            <person name="Weil B."/>
            <person name="Wellenreuther R."/>
            <person name="Gassenhuber J."/>
            <person name="Glassl S."/>
            <person name="Ansorge W."/>
            <person name="Boecher M."/>
            <person name="Bloecker H."/>
            <person name="Bauersachs S."/>
            <person name="Blum H."/>
            <person name="Lauber J."/>
            <person name="Duesterhoeft A."/>
            <person name="Beyer A."/>
            <person name="Koehrer K."/>
            <person name="Strack N."/>
            <person name="Mewes H.-W."/>
            <person name="Ottenwaelder B."/>
            <person name="Obermaier B."/>
            <person name="Tampe J."/>
            <person name="Heubner D."/>
            <person name="Wambutt R."/>
            <person name="Korn B."/>
            <person name="Klein M."/>
            <person name="Poustka A."/>
        </authorList>
    </citation>
    <scope>NUCLEOTIDE SEQUENCE [LARGE SCALE MRNA] OF 204-962 (ISOFORM 1)</scope>
    <source>
        <tissue>Testis</tissue>
    </source>
</reference>
<reference key="7">
    <citation type="journal article" date="2005" name="Cell">
        <title>Integrator, a multiprotein mediator of small nuclear RNA processing, associates with the C-terminal repeat of RNA polymerase II.</title>
        <authorList>
            <person name="Baillat D."/>
            <person name="Hakimi M.-A."/>
            <person name="Naeaer A.M."/>
            <person name="Shilatifard A."/>
            <person name="Cooch N."/>
            <person name="Shiekhattar R."/>
        </authorList>
    </citation>
    <scope>FUNCTION</scope>
    <scope>IDENTIFICATION BY MASS SPECTROMETRY</scope>
    <scope>IDENTIFICATION IN THE INTEGRATOR COMPLEX</scope>
</reference>
<reference key="8">
    <citation type="journal article" date="2008" name="Mol. Cell">
        <title>Kinase-selective enrichment enables quantitative phosphoproteomics of the kinome across the cell cycle.</title>
        <authorList>
            <person name="Daub H."/>
            <person name="Olsen J.V."/>
            <person name="Bairlein M."/>
            <person name="Gnad F."/>
            <person name="Oppermann F.S."/>
            <person name="Korner R."/>
            <person name="Greff Z."/>
            <person name="Keri G."/>
            <person name="Stemmann O."/>
            <person name="Mann M."/>
        </authorList>
    </citation>
    <scope>IDENTIFICATION BY MASS SPECTROMETRY [LARGE SCALE ANALYSIS]</scope>
    <source>
        <tissue>Cervix carcinoma</tissue>
    </source>
</reference>
<reference key="9">
    <citation type="journal article" date="2010" name="Sci. Signal.">
        <title>Quantitative phosphoproteomics reveals widespread full phosphorylation site occupancy during mitosis.</title>
        <authorList>
            <person name="Olsen J.V."/>
            <person name="Vermeulen M."/>
            <person name="Santamaria A."/>
            <person name="Kumar C."/>
            <person name="Miller M.L."/>
            <person name="Jensen L.J."/>
            <person name="Gnad F."/>
            <person name="Cox J."/>
            <person name="Jensen T.S."/>
            <person name="Nigg E.A."/>
            <person name="Brunak S."/>
            <person name="Mann M."/>
        </authorList>
    </citation>
    <scope>IDENTIFICATION BY MASS SPECTROMETRY [LARGE SCALE ANALYSIS]</scope>
    <source>
        <tissue>Cervix carcinoma</tissue>
    </source>
</reference>
<reference key="10">
    <citation type="journal article" date="2011" name="BMC Syst. Biol.">
        <title>Initial characterization of the human central proteome.</title>
        <authorList>
            <person name="Burkard T.R."/>
            <person name="Planyavsky M."/>
            <person name="Kaupe I."/>
            <person name="Breitwieser F.P."/>
            <person name="Buerckstuemmer T."/>
            <person name="Bennett K.L."/>
            <person name="Superti-Furga G."/>
            <person name="Colinge J."/>
        </authorList>
    </citation>
    <scope>IDENTIFICATION BY MASS SPECTROMETRY [LARGE SCALE ANALYSIS]</scope>
</reference>
<reference key="11">
    <citation type="journal article" date="2011" name="Science">
        <title>A DNA damage response screen identifies RHINO, a 9-1-1 and TopBP1 interacting protein required for ATR signaling.</title>
        <authorList>
            <person name="Cotta-Ramusino C."/>
            <person name="McDonald E.R. III"/>
            <person name="Hurov K."/>
            <person name="Sowa M.E."/>
            <person name="Harper J.W."/>
            <person name="Elledge S.J."/>
        </authorList>
    </citation>
    <scope>FUNCTION</scope>
    <scope>INTERACTION WITH NABP2</scope>
    <scope>SUBCELLULAR LOCATION</scope>
</reference>
<reference key="12">
    <citation type="journal article" date="2013" name="J. Proteome Res.">
        <title>Toward a comprehensive characterization of a human cancer cell phosphoproteome.</title>
        <authorList>
            <person name="Zhou H."/>
            <person name="Di Palma S."/>
            <person name="Preisinger C."/>
            <person name="Peng M."/>
            <person name="Polat A.N."/>
            <person name="Heck A.J."/>
            <person name="Mohammed S."/>
        </authorList>
    </citation>
    <scope>PHOSPHORYLATION [LARGE SCALE ANALYSIS] AT SER-338 AND SER-809</scope>
    <scope>IDENTIFICATION BY MASS SPECTROMETRY [LARGE SCALE ANALYSIS]</scope>
    <source>
        <tissue>Cervix carcinoma</tissue>
        <tissue>Erythroleukemia</tissue>
    </source>
</reference>
<reference key="13">
    <citation type="journal article" date="2013" name="Mol. Biol. Cell">
        <title>Nuclear-localized Asunder regulates cytoplasmic dynein localization via its role in the integrator complex.</title>
        <authorList>
            <person name="Jodoin J.N."/>
            <person name="Sitaram P."/>
            <person name="Albrecht T.R."/>
            <person name="May S.B."/>
            <person name="Shboul M."/>
            <person name="Lee E."/>
            <person name="Reversade B."/>
            <person name="Wagner E.J."/>
            <person name="Lee L.A."/>
        </authorList>
    </citation>
    <scope>FUNCTION</scope>
    <scope>SUBCELLULAR LOCATION</scope>
</reference>
<reference key="14">
    <citation type="journal article" date="2018" name="Nucleic Acids Res.">
        <title>Integrator subunit 4 is a 'Symplekin-like' scaffold that associates with INTS9/11 to form the Integrator cleavage module.</title>
        <authorList>
            <person name="Albrecht T.R."/>
            <person name="Shevtsov S.P."/>
            <person name="Wu Y."/>
            <person name="Mascibroda L.G."/>
            <person name="Peart N.J."/>
            <person name="Huang K.L."/>
            <person name="Sawyer I.A."/>
            <person name="Tong L."/>
            <person name="Dundr M."/>
            <person name="Wagner E.J."/>
        </authorList>
    </citation>
    <scope>SUBCELLULAR LOCATION</scope>
    <scope>IDENTIFICATION IN THE INTEGRATOR COMPLEX</scope>
</reference>
<reference key="15">
    <citation type="journal article" date="2024" name="Mol. Cell">
        <title>Cytoplasmic binding partners of the Integrator endonuclease INTS11 and its paralog CPSF73 are required for their nuclear function.</title>
        <authorList>
            <person name="Lin M.H."/>
            <person name="Jensen M.K."/>
            <person name="Elrod N.D."/>
            <person name="Chu H.F."/>
            <person name="Haseley M."/>
            <person name="Beam A.C."/>
            <person name="Huang K.L."/>
            <person name="Chiang W."/>
            <person name="Russell W.K."/>
            <person name="Williams K."/>
            <person name="Proschel C."/>
            <person name="Wagner E.J."/>
            <person name="Tong L."/>
        </authorList>
    </citation>
    <scope>IDENTIFICATION IN THE INTEGRATOR COMPLEX</scope>
    <scope>SUBCELLULAR LOCATION</scope>
</reference>
<reference evidence="18" key="16">
    <citation type="journal article" date="2020" name="Science">
        <title>Identification of Integrator-PP2A complex (INTAC), an RNA polymerase II phosphatase.</title>
        <authorList>
            <person name="Zheng H."/>
            <person name="Qi Y."/>
            <person name="Hu S."/>
            <person name="Cao X."/>
            <person name="Xu C."/>
            <person name="Yin Z."/>
            <person name="Chen X."/>
            <person name="Li Y."/>
            <person name="Liu W."/>
            <person name="Li J."/>
            <person name="Wang J."/>
            <person name="Wei G."/>
            <person name="Liang K."/>
            <person name="Chen F.X."/>
            <person name="Xu Y."/>
        </authorList>
    </citation>
    <scope>STRUCTURE BY ELECTRON MICROSCOPY (3.50 ANGSTROMS) OF INTAC COMPLEX</scope>
    <scope>FUNCTION</scope>
    <scope>IDENTIFICATION IN THE INTAC COMPLEX</scope>
</reference>
<reference evidence="19" key="17">
    <citation type="journal article" date="2021" name="Science">
        <title>Structural basis of Integrator-mediated transcription regulation.</title>
        <authorList>
            <person name="Fianu I."/>
            <person name="Chen Y."/>
            <person name="Dienemann C."/>
            <person name="Dybkov O."/>
            <person name="Linden A."/>
            <person name="Urlaub H."/>
            <person name="Cramer P."/>
        </authorList>
    </citation>
    <scope>STRUCTURE BY ELECTRON MICROSCOPY (3.60 ANGSTROMS) OF INTEGRATOR COMPLEX</scope>
    <scope>IDENTIFICATION IN THE INTEGRATOR COMPLEX</scope>
</reference>
<reference evidence="20" key="18">
    <citation type="journal article" date="2023" name="Protein Cell">
        <title>Structural basis of INTAC-regulated transcription.</title>
        <authorList>
            <person name="Zheng H."/>
            <person name="Jin Q."/>
            <person name="Wang X."/>
            <person name="Qi Y."/>
            <person name="Liu W."/>
            <person name="Ren Y."/>
            <person name="Zhao D."/>
            <person name="Xavier Chen F."/>
            <person name="Cheng J."/>
            <person name="Chen X."/>
            <person name="Xu Y."/>
        </authorList>
    </citation>
    <scope>STRUCTURE BY ELECTRON MICROSCOPY (4.18 ANGSTROMS) OF INTAC COMPLEX</scope>
</reference>
<reference evidence="21 22 23" key="19">
    <citation type="journal article" date="2024" name="Nature">
        <title>Structural basis of Integrator-dependent RNA polymerase II termination.</title>
        <authorList>
            <person name="Fianu I."/>
            <person name="Ochmann M."/>
            <person name="Walshe J.L."/>
            <person name="Dybkov O."/>
            <person name="Cruz J.N."/>
            <person name="Urlaub H."/>
            <person name="Cramer P."/>
        </authorList>
    </citation>
    <scope>STRUCTURE BY ELECTRON MICROSCOPY (3.10 ANGSTROMS) OF INTAC COMPLEX</scope>
    <scope>FUNCTION</scope>
    <scope>IDENTIFICATION IN THE INTAC COMPLEX</scope>
</reference>
<proteinExistence type="evidence at protein level"/>
<sequence>MASNSTKSFLADAGYGEQELDANSALMELDKGLRSGKLGEQCEAVVRFPRLFQKYPFPILINSAFLKLADVFRVGNNFLRLCVLKVTQQSEKHLEKILNVDEFVKRIFSVIHSNDPVARAITLRMLGSLASIIPERKNAHHSIRQSLDSHDNVEVEAAVFAAANFSAQSKDFAVGICNKISEMIQGLATPVDLKLKLIPILQHMHHDAILASSARQLLQQLVTSYPSTKMVIVSLHTFTLLAASSLVDTPKQIQLLLQYLKNDPRKAVKRLAIQDLKLLANKTPHTWSRENIQALCECALQTPYDSLKLGMLSVLSTLSGTIAIKHYFSIVPGNVSSSPRSSDLVKLAQECCYHNNRGIAAHGVRVLTNITVSCQEKDLLALEQDAVFGLESLLVLCSQDDSPGAQATLKIALNCMVKLAKGRPHLSQSVVETLLTQLHSAQDAARILMCHCLAAIAMQLPVLGDGMLGDLMELYKVIGRSATDKQQELLVSLATVIFVASQKALSVESKAVIKQQLESVSNGWTVYRIARQASRMGNHDMAKELYQSLLTQVASEHFYFWLNSLKEFSHAEQCLTGLQEENYSSALSCIAESLKFYHKGIASLTAASTPLNPLSFQCEFVKLRIDLLQAFSQLICTCNSLKTSPPPAIATTIAMTLGNDLQRCGRISNQMKQSMEEFRSLASRYGDLYQASFDADSATLRNVELQQQSCLLISHAIEALILDPESASFQEYGSTGTAHADSEYERRMMSVYNHVLEEVESLNRKYTPVSYMHTACLCNAIIALLKVPLSFQRYFFQKLQSTSIKLALSPSPRNPAEPIAVQNNQQLALKVEGVVQHGSKPGLFRKIQSVCLNVSSTLQSKSGQDYKIPIDNMTNEMEQRVEPHNDYFSTQFLLNFAILGTHNITVESSVKDANGIVWKTGPRTTIFVKSLEDPYSQQIRLQQQQAQQPLQQQQQRNAYTRF</sequence>